<dbReference type="EMBL" id="AP009324">
    <property type="protein sequence ID" value="BAF77882.1"/>
    <property type="molecule type" value="Genomic_DNA"/>
</dbReference>
<dbReference type="RefSeq" id="WP_001242103.1">
    <property type="nucleotide sequence ID" value="NC_009782.1"/>
</dbReference>
<dbReference type="KEGG" id="saw:SAHV_0999"/>
<dbReference type="HOGENOM" id="CLU_142282_0_0_9"/>
<dbReference type="HAMAP" id="MF_01861">
    <property type="entry name" value="UPF0738"/>
    <property type="match status" value="1"/>
</dbReference>
<dbReference type="InterPro" id="IPR020908">
    <property type="entry name" value="UPF0738"/>
</dbReference>
<dbReference type="Pfam" id="PF19785">
    <property type="entry name" value="UPF0738"/>
    <property type="match status" value="1"/>
</dbReference>
<sequence length="115" mass="13499">MRLYINEIKIKDDILYCYTEDSIKGLSEVGQMLVDSDNYAFAYTLDDGKAYAYLIFVQETWTMLHENTTKKIIINDELELTEFHQELTYILDNIKGNNNYGKEFVATVEETFDIE</sequence>
<gene>
    <name type="ordered locus">SAHV_0999</name>
</gene>
<proteinExistence type="inferred from homology"/>
<evidence type="ECO:0000255" key="1">
    <source>
        <dbReference type="HAMAP-Rule" id="MF_01861"/>
    </source>
</evidence>
<protein>
    <recommendedName>
        <fullName evidence="1">UPF0738 protein SAHV_0999</fullName>
    </recommendedName>
</protein>
<organism>
    <name type="scientific">Staphylococcus aureus (strain Mu3 / ATCC 700698)</name>
    <dbReference type="NCBI Taxonomy" id="418127"/>
    <lineage>
        <taxon>Bacteria</taxon>
        <taxon>Bacillati</taxon>
        <taxon>Bacillota</taxon>
        <taxon>Bacilli</taxon>
        <taxon>Bacillales</taxon>
        <taxon>Staphylococcaceae</taxon>
        <taxon>Staphylococcus</taxon>
    </lineage>
</organism>
<name>Y999_STAA1</name>
<comment type="similarity">
    <text evidence="1">Belongs to the UPF0738 family.</text>
</comment>
<reference key="1">
    <citation type="journal article" date="2008" name="Antimicrob. Agents Chemother.">
        <title>Mutated response regulator graR is responsible for phenotypic conversion of Staphylococcus aureus from heterogeneous vancomycin-intermediate resistance to vancomycin-intermediate resistance.</title>
        <authorList>
            <person name="Neoh H.-M."/>
            <person name="Cui L."/>
            <person name="Yuzawa H."/>
            <person name="Takeuchi F."/>
            <person name="Matsuo M."/>
            <person name="Hiramatsu K."/>
        </authorList>
    </citation>
    <scope>NUCLEOTIDE SEQUENCE [LARGE SCALE GENOMIC DNA]</scope>
    <source>
        <strain>Mu3 / ATCC 700698</strain>
    </source>
</reference>
<accession>A7X0M9</accession>
<feature type="chain" id="PRO_0000369663" description="UPF0738 protein SAHV_0999">
    <location>
        <begin position="1"/>
        <end position="115"/>
    </location>
</feature>